<dbReference type="EMBL" id="CP000253">
    <property type="protein sequence ID" value="ABD31514.1"/>
    <property type="molecule type" value="Genomic_DNA"/>
</dbReference>
<dbReference type="RefSeq" id="WP_000623881.1">
    <property type="nucleotide sequence ID" value="NZ_LS483365.1"/>
</dbReference>
<dbReference type="RefSeq" id="YP_500963.1">
    <property type="nucleotide sequence ID" value="NC_007795.1"/>
</dbReference>
<dbReference type="PDB" id="4WCE">
    <property type="method" value="X-ray"/>
    <property type="resolution" value="3.53 A"/>
    <property type="chains" value="L=1-119"/>
</dbReference>
<dbReference type="PDB" id="4WF9">
    <property type="method" value="X-ray"/>
    <property type="resolution" value="3.43 A"/>
    <property type="chains" value="L=1-119"/>
</dbReference>
<dbReference type="PDB" id="4WFA">
    <property type="method" value="X-ray"/>
    <property type="resolution" value="3.39 A"/>
    <property type="chains" value="L=1-119"/>
</dbReference>
<dbReference type="PDB" id="4WFB">
    <property type="method" value="X-ray"/>
    <property type="resolution" value="3.43 A"/>
    <property type="chains" value="L=1-119"/>
</dbReference>
<dbReference type="PDB" id="5HKV">
    <property type="method" value="X-ray"/>
    <property type="resolution" value="3.66 A"/>
    <property type="chains" value="L=1-119"/>
</dbReference>
<dbReference type="PDB" id="5HL7">
    <property type="method" value="X-ray"/>
    <property type="resolution" value="3.55 A"/>
    <property type="chains" value="L=1-119"/>
</dbReference>
<dbReference type="PDB" id="5LI0">
    <property type="method" value="EM"/>
    <property type="resolution" value="3.80 A"/>
    <property type="chains" value="R=1-119"/>
</dbReference>
<dbReference type="PDB" id="5ND8">
    <property type="method" value="EM"/>
    <property type="resolution" value="3.70 A"/>
    <property type="chains" value="R=1-119"/>
</dbReference>
<dbReference type="PDB" id="5ND9">
    <property type="method" value="EM"/>
    <property type="resolution" value="3.70 A"/>
    <property type="chains" value="R=1-119"/>
</dbReference>
<dbReference type="PDB" id="5NRG">
    <property type="method" value="X-ray"/>
    <property type="resolution" value="3.44 A"/>
    <property type="chains" value="L=1-119"/>
</dbReference>
<dbReference type="PDB" id="5TCU">
    <property type="method" value="EM"/>
    <property type="resolution" value="3.90 A"/>
    <property type="chains" value="LR=1-113"/>
</dbReference>
<dbReference type="PDB" id="6DDD">
    <property type="method" value="EM"/>
    <property type="resolution" value="3.10 A"/>
    <property type="chains" value="a=1-119"/>
</dbReference>
<dbReference type="PDB" id="6DDG">
    <property type="method" value="EM"/>
    <property type="resolution" value="3.10 A"/>
    <property type="chains" value="a=1-119"/>
</dbReference>
<dbReference type="PDB" id="6HMA">
    <property type="method" value="EM"/>
    <property type="resolution" value="2.65 A"/>
    <property type="chains" value="M=1-119"/>
</dbReference>
<dbReference type="PDB" id="6SJ6">
    <property type="method" value="EM"/>
    <property type="resolution" value="3.23 A"/>
    <property type="chains" value="R=1-119"/>
</dbReference>
<dbReference type="PDB" id="6WQN">
    <property type="method" value="EM"/>
    <property type="resolution" value="2.90 A"/>
    <property type="chains" value="a=1-119"/>
</dbReference>
<dbReference type="PDB" id="6WQQ">
    <property type="method" value="EM"/>
    <property type="resolution" value="3.10 A"/>
    <property type="chains" value="a=1-119"/>
</dbReference>
<dbReference type="PDB" id="6WRS">
    <property type="method" value="EM"/>
    <property type="resolution" value="3.20 A"/>
    <property type="chains" value="a=1-119"/>
</dbReference>
<dbReference type="PDB" id="6WRU">
    <property type="method" value="EM"/>
    <property type="resolution" value="3.10 A"/>
    <property type="chains" value="a=1-119"/>
</dbReference>
<dbReference type="PDB" id="6YEF">
    <property type="method" value="EM"/>
    <property type="resolution" value="3.20 A"/>
    <property type="chains" value="R=1-119"/>
</dbReference>
<dbReference type="PDB" id="7ASM">
    <property type="method" value="EM"/>
    <property type="resolution" value="2.48 A"/>
    <property type="chains" value="M=1-119"/>
</dbReference>
<dbReference type="PDB" id="7ASN">
    <property type="method" value="EM"/>
    <property type="resolution" value="2.73 A"/>
    <property type="chains" value="M=3-119"/>
</dbReference>
<dbReference type="PDB" id="7NHL">
    <property type="method" value="EM"/>
    <property type="resolution" value="3.10 A"/>
    <property type="chains" value="R=1-119"/>
</dbReference>
<dbReference type="PDB" id="7NHM">
    <property type="method" value="EM"/>
    <property type="resolution" value="3.10 A"/>
    <property type="chains" value="R=1-119"/>
</dbReference>
<dbReference type="PDB" id="7TTU">
    <property type="method" value="EM"/>
    <property type="resolution" value="3.00 A"/>
    <property type="chains" value="a=1-119"/>
</dbReference>
<dbReference type="PDB" id="7TTW">
    <property type="method" value="EM"/>
    <property type="resolution" value="2.90 A"/>
    <property type="chains" value="a=1-119"/>
</dbReference>
<dbReference type="PDB" id="8P2F">
    <property type="method" value="EM"/>
    <property type="resolution" value="2.44 A"/>
    <property type="chains" value="R=1-119"/>
</dbReference>
<dbReference type="PDB" id="8P2G">
    <property type="method" value="EM"/>
    <property type="resolution" value="2.02 A"/>
    <property type="chains" value="R=1-119"/>
</dbReference>
<dbReference type="PDB" id="8P2H">
    <property type="method" value="EM"/>
    <property type="resolution" value="2.49 A"/>
    <property type="chains" value="R=1-119"/>
</dbReference>
<dbReference type="PDBsum" id="4WCE"/>
<dbReference type="PDBsum" id="4WF9"/>
<dbReference type="PDBsum" id="4WFA"/>
<dbReference type="PDBsum" id="4WFB"/>
<dbReference type="PDBsum" id="5HKV"/>
<dbReference type="PDBsum" id="5HL7"/>
<dbReference type="PDBsum" id="5LI0"/>
<dbReference type="PDBsum" id="5ND8"/>
<dbReference type="PDBsum" id="5ND9"/>
<dbReference type="PDBsum" id="5NRG"/>
<dbReference type="PDBsum" id="5TCU"/>
<dbReference type="PDBsum" id="6DDD"/>
<dbReference type="PDBsum" id="6DDG"/>
<dbReference type="PDBsum" id="6HMA"/>
<dbReference type="PDBsum" id="6SJ6"/>
<dbReference type="PDBsum" id="6WQN"/>
<dbReference type="PDBsum" id="6WQQ"/>
<dbReference type="PDBsum" id="6WRS"/>
<dbReference type="PDBsum" id="6WRU"/>
<dbReference type="PDBsum" id="6YEF"/>
<dbReference type="PDBsum" id="7ASM"/>
<dbReference type="PDBsum" id="7ASN"/>
<dbReference type="PDBsum" id="7NHL"/>
<dbReference type="PDBsum" id="7NHM"/>
<dbReference type="PDBsum" id="7TTU"/>
<dbReference type="PDBsum" id="7TTW"/>
<dbReference type="PDBsum" id="8P2F"/>
<dbReference type="PDBsum" id="8P2G"/>
<dbReference type="PDBsum" id="8P2H"/>
<dbReference type="EMDB" id="EMD-10212"/>
<dbReference type="EMDB" id="EMD-10791"/>
<dbReference type="EMDB" id="EMD-12332"/>
<dbReference type="EMDB" id="EMD-12333"/>
<dbReference type="EMDB" id="EMD-17363"/>
<dbReference type="EMDB" id="EMD-17364"/>
<dbReference type="EMDB" id="EMD-17365"/>
<dbReference type="EMDB" id="EMD-3624"/>
<dbReference type="EMDB" id="EMD-3625"/>
<dbReference type="EMDB" id="EMD-4050"/>
<dbReference type="EMDB" id="EMD-8402"/>
<dbReference type="SMR" id="Q2FW22"/>
<dbReference type="IntAct" id="Q2FW22">
    <property type="interactions" value="1"/>
</dbReference>
<dbReference type="STRING" id="93061.SAOUHSC_02495"/>
<dbReference type="PaxDb" id="1280-SAXN108_2484"/>
<dbReference type="GeneID" id="3920872"/>
<dbReference type="KEGG" id="sao:SAOUHSC_02495"/>
<dbReference type="PATRIC" id="fig|93061.5.peg.2251"/>
<dbReference type="eggNOG" id="COG0256">
    <property type="taxonomic scope" value="Bacteria"/>
</dbReference>
<dbReference type="HOGENOM" id="CLU_098841_0_1_9"/>
<dbReference type="OrthoDB" id="9810939at2"/>
<dbReference type="EvolutionaryTrace" id="Q2FW22"/>
<dbReference type="PRO" id="PR:Q2FW22"/>
<dbReference type="Proteomes" id="UP000008816">
    <property type="component" value="Chromosome"/>
</dbReference>
<dbReference type="GO" id="GO:0022625">
    <property type="term" value="C:cytosolic large ribosomal subunit"/>
    <property type="evidence" value="ECO:0000318"/>
    <property type="project" value="GO_Central"/>
</dbReference>
<dbReference type="GO" id="GO:0008097">
    <property type="term" value="F:5S rRNA binding"/>
    <property type="evidence" value="ECO:0000318"/>
    <property type="project" value="GO_Central"/>
</dbReference>
<dbReference type="GO" id="GO:0003735">
    <property type="term" value="F:structural constituent of ribosome"/>
    <property type="evidence" value="ECO:0007669"/>
    <property type="project" value="InterPro"/>
</dbReference>
<dbReference type="GO" id="GO:0006412">
    <property type="term" value="P:translation"/>
    <property type="evidence" value="ECO:0007669"/>
    <property type="project" value="UniProtKB-UniRule"/>
</dbReference>
<dbReference type="CDD" id="cd00432">
    <property type="entry name" value="Ribosomal_L18_L5e"/>
    <property type="match status" value="1"/>
</dbReference>
<dbReference type="FunFam" id="3.30.420.100:FF:000001">
    <property type="entry name" value="50S ribosomal protein L18"/>
    <property type="match status" value="1"/>
</dbReference>
<dbReference type="Gene3D" id="3.30.420.100">
    <property type="match status" value="1"/>
</dbReference>
<dbReference type="HAMAP" id="MF_01337_B">
    <property type="entry name" value="Ribosomal_uL18_B"/>
    <property type="match status" value="1"/>
</dbReference>
<dbReference type="InterPro" id="IPR004389">
    <property type="entry name" value="Ribosomal_uL18_bac-type"/>
</dbReference>
<dbReference type="InterPro" id="IPR005484">
    <property type="entry name" value="Ribosomal_uL18_bac/euk"/>
</dbReference>
<dbReference type="NCBIfam" id="TIGR00060">
    <property type="entry name" value="L18_bact"/>
    <property type="match status" value="1"/>
</dbReference>
<dbReference type="PANTHER" id="PTHR12899">
    <property type="entry name" value="39S RIBOSOMAL PROTEIN L18, MITOCHONDRIAL"/>
    <property type="match status" value="1"/>
</dbReference>
<dbReference type="PANTHER" id="PTHR12899:SF3">
    <property type="entry name" value="LARGE RIBOSOMAL SUBUNIT PROTEIN UL18M"/>
    <property type="match status" value="1"/>
</dbReference>
<dbReference type="Pfam" id="PF00861">
    <property type="entry name" value="Ribosomal_L18p"/>
    <property type="match status" value="1"/>
</dbReference>
<dbReference type="SUPFAM" id="SSF53137">
    <property type="entry name" value="Translational machinery components"/>
    <property type="match status" value="1"/>
</dbReference>
<name>RL18_STAA8</name>
<accession>Q2FW22</accession>
<organism>
    <name type="scientific">Staphylococcus aureus (strain NCTC 8325 / PS 47)</name>
    <dbReference type="NCBI Taxonomy" id="93061"/>
    <lineage>
        <taxon>Bacteria</taxon>
        <taxon>Bacillati</taxon>
        <taxon>Bacillota</taxon>
        <taxon>Bacilli</taxon>
        <taxon>Bacillales</taxon>
        <taxon>Staphylococcaceae</taxon>
        <taxon>Staphylococcus</taxon>
    </lineage>
</organism>
<protein>
    <recommendedName>
        <fullName evidence="1">Large ribosomal subunit protein uL18</fullName>
    </recommendedName>
    <alternativeName>
        <fullName evidence="2">50S ribosomal protein L18</fullName>
    </alternativeName>
</protein>
<evidence type="ECO:0000255" key="1">
    <source>
        <dbReference type="HAMAP-Rule" id="MF_01337"/>
    </source>
</evidence>
<evidence type="ECO:0000305" key="2"/>
<evidence type="ECO:0007829" key="3">
    <source>
        <dbReference type="PDB" id="4WFA"/>
    </source>
</evidence>
<evidence type="ECO:0007829" key="4">
    <source>
        <dbReference type="PDB" id="6WQN"/>
    </source>
</evidence>
<evidence type="ECO:0007829" key="5">
    <source>
        <dbReference type="PDB" id="6WRS"/>
    </source>
</evidence>
<evidence type="ECO:0007829" key="6">
    <source>
        <dbReference type="PDB" id="7ASM"/>
    </source>
</evidence>
<gene>
    <name evidence="1" type="primary">rplR</name>
    <name type="ordered locus">SAOUHSC_02495</name>
</gene>
<reference key="1">
    <citation type="book" date="2006" name="Gram positive pathogens, 2nd edition">
        <title>The Staphylococcus aureus NCTC 8325 genome.</title>
        <editorList>
            <person name="Fischetti V."/>
            <person name="Novick R."/>
            <person name="Ferretti J."/>
            <person name="Portnoy D."/>
            <person name="Rood J."/>
        </editorList>
        <authorList>
            <person name="Gillaspy A.F."/>
            <person name="Worrell V."/>
            <person name="Orvis J."/>
            <person name="Roe B.A."/>
            <person name="Dyer D.W."/>
            <person name="Iandolo J.J."/>
        </authorList>
    </citation>
    <scope>NUCLEOTIDE SEQUENCE [LARGE SCALE GENOMIC DNA]</scope>
    <source>
        <strain>NCTC 8325 / PS 47</strain>
    </source>
</reference>
<feature type="chain" id="PRO_0000251374" description="Large ribosomal subunit protein uL18">
    <location>
        <begin position="1"/>
        <end position="119"/>
    </location>
</feature>
<feature type="helix" evidence="6">
    <location>
        <begin position="7"/>
        <end position="18"/>
    </location>
</feature>
<feature type="turn" evidence="4">
    <location>
        <begin position="19"/>
        <end position="21"/>
    </location>
</feature>
<feature type="turn" evidence="5">
    <location>
        <begin position="23"/>
        <end position="25"/>
    </location>
</feature>
<feature type="strand" evidence="6">
    <location>
        <begin position="26"/>
        <end position="28"/>
    </location>
</feature>
<feature type="strand" evidence="6">
    <location>
        <begin position="30"/>
        <end position="35"/>
    </location>
</feature>
<feature type="strand" evidence="6">
    <location>
        <begin position="40"/>
        <end position="46"/>
    </location>
</feature>
<feature type="turn" evidence="6">
    <location>
        <begin position="47"/>
        <end position="50"/>
    </location>
</feature>
<feature type="strand" evidence="6">
    <location>
        <begin position="51"/>
        <end position="57"/>
    </location>
</feature>
<feature type="strand" evidence="6">
    <location>
        <begin position="60"/>
        <end position="63"/>
    </location>
</feature>
<feature type="turn" evidence="4">
    <location>
        <begin position="67"/>
        <end position="69"/>
    </location>
</feature>
<feature type="helix" evidence="6">
    <location>
        <begin position="70"/>
        <end position="85"/>
    </location>
</feature>
<feature type="strand" evidence="6">
    <location>
        <begin position="93"/>
        <end position="95"/>
    </location>
</feature>
<feature type="turn" evidence="3">
    <location>
        <begin position="97"/>
        <end position="101"/>
    </location>
</feature>
<feature type="helix" evidence="6">
    <location>
        <begin position="103"/>
        <end position="113"/>
    </location>
</feature>
<feature type="turn" evidence="6">
    <location>
        <begin position="114"/>
        <end position="116"/>
    </location>
</feature>
<proteinExistence type="evidence at protein level"/>
<comment type="function">
    <text evidence="1">This is one of the proteins that bind and probably mediate the attachment of the 5S RNA into the large ribosomal subunit, where it forms part of the central protuberance.</text>
</comment>
<comment type="subunit">
    <text evidence="1">Part of the 50S ribosomal subunit; part of the 5S rRNA/L5/L18/L25 subcomplex. Contacts the 5S and 23S rRNAs.</text>
</comment>
<comment type="similarity">
    <text evidence="1">Belongs to the universal ribosomal protein uL18 family.</text>
</comment>
<keyword id="KW-0002">3D-structure</keyword>
<keyword id="KW-1185">Reference proteome</keyword>
<keyword id="KW-0687">Ribonucleoprotein</keyword>
<keyword id="KW-0689">Ribosomal protein</keyword>
<keyword id="KW-0694">RNA-binding</keyword>
<keyword id="KW-0699">rRNA-binding</keyword>
<sequence>MISKIDKNKVRLKRHARVRTNLSGTAEKPRLNVYRSNKHIYAQIIDDNKGVTLAQASSKDSDIATTATKVELATKVGEAIAKKAADKGIKEIVFDRGGYLYHGRVKALAEAARESGLEF</sequence>